<comment type="function">
    <text evidence="1">Peptide chain release factor 1 directs the termination of translation in response to the peptide chain termination codons UAG and UAA.</text>
</comment>
<comment type="subcellular location">
    <subcellularLocation>
        <location evidence="1">Cytoplasm</location>
    </subcellularLocation>
</comment>
<comment type="PTM">
    <text evidence="1">Methylated by PrmC. Methylation increases the termination efficiency of RF1 (By similarity).</text>
</comment>
<comment type="similarity">
    <text evidence="2">Belongs to the prokaryotic/mitochondrial release factor family.</text>
</comment>
<protein>
    <recommendedName>
        <fullName>Peptide chain release factor 1</fullName>
        <shortName>RF-1</shortName>
    </recommendedName>
</protein>
<keyword id="KW-0963">Cytoplasm</keyword>
<keyword id="KW-0488">Methylation</keyword>
<keyword id="KW-0648">Protein biosynthesis</keyword>
<keyword id="KW-1185">Reference proteome</keyword>
<name>RF1_MYCTO</name>
<organism>
    <name type="scientific">Mycobacterium tuberculosis (strain CDC 1551 / Oshkosh)</name>
    <dbReference type="NCBI Taxonomy" id="83331"/>
    <lineage>
        <taxon>Bacteria</taxon>
        <taxon>Bacillati</taxon>
        <taxon>Actinomycetota</taxon>
        <taxon>Actinomycetes</taxon>
        <taxon>Mycobacteriales</taxon>
        <taxon>Mycobacteriaceae</taxon>
        <taxon>Mycobacterium</taxon>
        <taxon>Mycobacterium tuberculosis complex</taxon>
    </lineage>
</organism>
<feature type="chain" id="PRO_0000428192" description="Peptide chain release factor 1">
    <location>
        <begin position="1"/>
        <end position="357"/>
    </location>
</feature>
<feature type="modified residue" description="N5-methylglutamine" evidence="1">
    <location>
        <position position="236"/>
    </location>
</feature>
<accession>P9WHG2</accession>
<accession>L0T686</accession>
<accession>P66016</accession>
<accession>Q10605</accession>
<evidence type="ECO:0000250" key="1"/>
<evidence type="ECO:0000305" key="2"/>
<proteinExistence type="inferred from homology"/>
<sequence length="357" mass="39036">MTQPVQTIDVLLAEHAELELALADPALHSNPAEARRVGRRFARLAPIVATHRKLTSARDDLETARELVASDESFAAEVAALEARVGELDAQLTDMLAPRDPHDADDIVLEVKSGEGGEESALFAADLARMYIRYAERHGWAVTVLDETTSDLGGYKDATLAIASKADTPDGVWSRMKFEGGVHRVQRVPVTESQGRVHTSAAGVLVYPEPEEVGQVQIDESDLRIDVFRSSGKGGQGVNTTDSAVRITHLPTGIVVTCQNERSQLQNKTRALQVLAARLQAMAEEQALADASADRASQIRTVDRSERIRTYNFPENRITDHRIGYKSHNLDQVLDGDLDALFDALSAADKQSRLRQS</sequence>
<gene>
    <name type="primary">prfA</name>
    <name type="ordered locus">MT1338</name>
</gene>
<reference key="1">
    <citation type="journal article" date="2002" name="J. Bacteriol.">
        <title>Whole-genome comparison of Mycobacterium tuberculosis clinical and laboratory strains.</title>
        <authorList>
            <person name="Fleischmann R.D."/>
            <person name="Alland D."/>
            <person name="Eisen J.A."/>
            <person name="Carpenter L."/>
            <person name="White O."/>
            <person name="Peterson J.D."/>
            <person name="DeBoy R.T."/>
            <person name="Dodson R.J."/>
            <person name="Gwinn M.L."/>
            <person name="Haft D.H."/>
            <person name="Hickey E.K."/>
            <person name="Kolonay J.F."/>
            <person name="Nelson W.C."/>
            <person name="Umayam L.A."/>
            <person name="Ermolaeva M.D."/>
            <person name="Salzberg S.L."/>
            <person name="Delcher A."/>
            <person name="Utterback T.R."/>
            <person name="Weidman J.F."/>
            <person name="Khouri H.M."/>
            <person name="Gill J."/>
            <person name="Mikula A."/>
            <person name="Bishai W."/>
            <person name="Jacobs W.R. Jr."/>
            <person name="Venter J.C."/>
            <person name="Fraser C.M."/>
        </authorList>
    </citation>
    <scope>NUCLEOTIDE SEQUENCE [LARGE SCALE GENOMIC DNA]</scope>
    <source>
        <strain>CDC 1551 / Oshkosh</strain>
    </source>
</reference>
<dbReference type="EMBL" id="AE000516">
    <property type="protein sequence ID" value="AAK45600.1"/>
    <property type="molecule type" value="Genomic_DNA"/>
</dbReference>
<dbReference type="PIR" id="G70773">
    <property type="entry name" value="G70773"/>
</dbReference>
<dbReference type="RefSeq" id="WP_003406670.1">
    <property type="nucleotide sequence ID" value="NZ_KK341227.1"/>
</dbReference>
<dbReference type="SMR" id="P9WHG2"/>
<dbReference type="GeneID" id="45425273"/>
<dbReference type="KEGG" id="mtc:MT1338"/>
<dbReference type="PATRIC" id="fig|83331.31.peg.1445"/>
<dbReference type="HOGENOM" id="CLU_036856_0_1_11"/>
<dbReference type="Proteomes" id="UP000001020">
    <property type="component" value="Chromosome"/>
</dbReference>
<dbReference type="GO" id="GO:0005737">
    <property type="term" value="C:cytoplasm"/>
    <property type="evidence" value="ECO:0007669"/>
    <property type="project" value="UniProtKB-SubCell"/>
</dbReference>
<dbReference type="GO" id="GO:0016149">
    <property type="term" value="F:translation release factor activity, codon specific"/>
    <property type="evidence" value="ECO:0007669"/>
    <property type="project" value="UniProtKB-UniRule"/>
</dbReference>
<dbReference type="FunFam" id="3.30.160.20:FF:000004">
    <property type="entry name" value="Peptide chain release factor 1"/>
    <property type="match status" value="1"/>
</dbReference>
<dbReference type="Gene3D" id="3.30.160.20">
    <property type="match status" value="1"/>
</dbReference>
<dbReference type="Gene3D" id="3.30.70.1660">
    <property type="match status" value="1"/>
</dbReference>
<dbReference type="Gene3D" id="6.10.140.1950">
    <property type="match status" value="1"/>
</dbReference>
<dbReference type="HAMAP" id="MF_00093">
    <property type="entry name" value="Rel_fac_1"/>
    <property type="match status" value="1"/>
</dbReference>
<dbReference type="InterPro" id="IPR005139">
    <property type="entry name" value="PCRF"/>
</dbReference>
<dbReference type="InterPro" id="IPR000352">
    <property type="entry name" value="Pep_chain_release_fac_I"/>
</dbReference>
<dbReference type="InterPro" id="IPR045853">
    <property type="entry name" value="Pep_chain_release_fac_I_sf"/>
</dbReference>
<dbReference type="InterPro" id="IPR050057">
    <property type="entry name" value="Prokaryotic/Mito_RF"/>
</dbReference>
<dbReference type="InterPro" id="IPR004373">
    <property type="entry name" value="RF-1"/>
</dbReference>
<dbReference type="NCBIfam" id="TIGR00019">
    <property type="entry name" value="prfA"/>
    <property type="match status" value="1"/>
</dbReference>
<dbReference type="NCBIfam" id="NF001859">
    <property type="entry name" value="PRK00591.1"/>
    <property type="match status" value="1"/>
</dbReference>
<dbReference type="PANTHER" id="PTHR43804">
    <property type="entry name" value="LD18447P"/>
    <property type="match status" value="1"/>
</dbReference>
<dbReference type="PANTHER" id="PTHR43804:SF7">
    <property type="entry name" value="LD18447P"/>
    <property type="match status" value="1"/>
</dbReference>
<dbReference type="Pfam" id="PF03462">
    <property type="entry name" value="PCRF"/>
    <property type="match status" value="1"/>
</dbReference>
<dbReference type="Pfam" id="PF00472">
    <property type="entry name" value="RF-1"/>
    <property type="match status" value="1"/>
</dbReference>
<dbReference type="SMART" id="SM00937">
    <property type="entry name" value="PCRF"/>
    <property type="match status" value="1"/>
</dbReference>
<dbReference type="SUPFAM" id="SSF75620">
    <property type="entry name" value="Release factor"/>
    <property type="match status" value="1"/>
</dbReference>
<dbReference type="PROSITE" id="PS00745">
    <property type="entry name" value="RF_PROK_I"/>
    <property type="match status" value="1"/>
</dbReference>